<comment type="function">
    <text evidence="1">Catalyzes the formation of the alpha-1,6-glucosidic linkages in glycogen by scission of a 1,4-alpha-linked oligosaccharide from growing alpha-1,4-glucan chains and the subsequent attachment of the oligosaccharide to the alpha-1,6 position.</text>
</comment>
<comment type="catalytic activity">
    <reaction evidence="1">
        <text>Transfers a segment of a (1-&gt;4)-alpha-D-glucan chain to a primary hydroxy group in a similar glucan chain.</text>
        <dbReference type="EC" id="2.4.1.18"/>
    </reaction>
</comment>
<comment type="pathway">
    <text evidence="1">Glycan biosynthesis; glycogen biosynthesis.</text>
</comment>
<comment type="subunit">
    <text evidence="1">Monomer.</text>
</comment>
<comment type="similarity">
    <text evidence="1">Belongs to the glycosyl hydrolase 13 family. GlgB subfamily.</text>
</comment>
<accession>A5EPZ7</accession>
<feature type="chain" id="PRO_1000061987" description="1,4-alpha-glucan branching enzyme GlgB">
    <location>
        <begin position="1"/>
        <end position="712"/>
    </location>
</feature>
<feature type="active site" description="Nucleophile" evidence="1">
    <location>
        <position position="397"/>
    </location>
</feature>
<feature type="active site" description="Proton donor" evidence="1">
    <location>
        <position position="450"/>
    </location>
</feature>
<sequence>MTHLSPEAFAIIEGRHADPFRYLGQHDVDGRTVIRAFLPEASRVEAVGDNGEVAPLARIHDAGLFTGTMSGPQRYRLRATFGDHVTDLEDPYRFLPILTDFDLHLLGEGNHERLYDKLGAHPMVLDGVDGVGFVVLAPNARRVSVVGDFNFWNARRHPMRVRGNGYWELFIPRAKAGDHYKFDIIGPQGEHLPLKSDPMAFAAEMRPKTASIVVDETRLPRPRPAPSDINKLDRPVSIYEVHLGSWRRKDNNQWLTYRELAEQLPAYARDMGFTHIEFLPVSEHPFDGSWGYQPTGLFAPTSRFGSPEDFCALVDACHREGLAVWLDWVPGHFPDDPHGLGHFDGTALYEHANPMQGRHLDWGTLIYNYGRTEVANFLRSNALFWLERYGIDGLRVDAVASMLYLDYSRPSGGWIPNKYGGRENLEAIEFLRRTNIEVFGHFPQATTAAEESTAWPQVSRPVDIGGLGFGYKWNMGWMHDTLRYVGKDPIHRKYHHGEILFGLHYAFSENFILPLSHDEVVHGKRSILGRMPGDDWQRFANLRAYYSFMFGHPGKKLLFMGCEIAQEREWNHDSSLDWHLLGDAKYAGIQALIRDLNHLYRNQPALHERDCEPEGFDWLITEDADRNVFAWVRKGFDERARCVVVVNFSPNVYYNYRVRVPLGGTWREVFNSDSSHYGGSNVGNVGQVHASEDQQLNLILPPMAAVFLVPEA</sequence>
<protein>
    <recommendedName>
        <fullName evidence="1">1,4-alpha-glucan branching enzyme GlgB</fullName>
        <ecNumber evidence="1">2.4.1.18</ecNumber>
    </recommendedName>
    <alternativeName>
        <fullName evidence="1">1,4-alpha-D-glucan:1,4-alpha-D-glucan 6-glucosyl-transferase</fullName>
    </alternativeName>
    <alternativeName>
        <fullName evidence="1">Alpha-(1-&gt;4)-glucan branching enzyme</fullName>
    </alternativeName>
    <alternativeName>
        <fullName evidence="1">Glycogen branching enzyme</fullName>
        <shortName evidence="1">BE</shortName>
    </alternativeName>
</protein>
<evidence type="ECO:0000255" key="1">
    <source>
        <dbReference type="HAMAP-Rule" id="MF_00685"/>
    </source>
</evidence>
<name>GLGB_BRASB</name>
<proteinExistence type="inferred from homology"/>
<keyword id="KW-0119">Carbohydrate metabolism</keyword>
<keyword id="KW-0320">Glycogen biosynthesis</keyword>
<keyword id="KW-0321">Glycogen metabolism</keyword>
<keyword id="KW-0328">Glycosyltransferase</keyword>
<keyword id="KW-1185">Reference proteome</keyword>
<keyword id="KW-0808">Transferase</keyword>
<reference key="1">
    <citation type="journal article" date="2007" name="Science">
        <title>Legumes symbioses: absence of nod genes in photosynthetic bradyrhizobia.</title>
        <authorList>
            <person name="Giraud E."/>
            <person name="Moulin L."/>
            <person name="Vallenet D."/>
            <person name="Barbe V."/>
            <person name="Cytryn E."/>
            <person name="Avarre J.-C."/>
            <person name="Jaubert M."/>
            <person name="Simon D."/>
            <person name="Cartieaux F."/>
            <person name="Prin Y."/>
            <person name="Bena G."/>
            <person name="Hannibal L."/>
            <person name="Fardoux J."/>
            <person name="Kojadinovic M."/>
            <person name="Vuillet L."/>
            <person name="Lajus A."/>
            <person name="Cruveiller S."/>
            <person name="Rouy Z."/>
            <person name="Mangenot S."/>
            <person name="Segurens B."/>
            <person name="Dossat C."/>
            <person name="Franck W.L."/>
            <person name="Chang W.-S."/>
            <person name="Saunders E."/>
            <person name="Bruce D."/>
            <person name="Richardson P."/>
            <person name="Normand P."/>
            <person name="Dreyfus B."/>
            <person name="Pignol D."/>
            <person name="Stacey G."/>
            <person name="Emerich D."/>
            <person name="Vermeglio A."/>
            <person name="Medigue C."/>
            <person name="Sadowsky M."/>
        </authorList>
    </citation>
    <scope>NUCLEOTIDE SEQUENCE [LARGE SCALE GENOMIC DNA]</scope>
    <source>
        <strain>BTAi1 / ATCC BAA-1182</strain>
    </source>
</reference>
<gene>
    <name evidence="1" type="primary">glgB</name>
    <name type="ordered locus">BBta_6323</name>
</gene>
<organism>
    <name type="scientific">Bradyrhizobium sp. (strain BTAi1 / ATCC BAA-1182)</name>
    <dbReference type="NCBI Taxonomy" id="288000"/>
    <lineage>
        <taxon>Bacteria</taxon>
        <taxon>Pseudomonadati</taxon>
        <taxon>Pseudomonadota</taxon>
        <taxon>Alphaproteobacteria</taxon>
        <taxon>Hyphomicrobiales</taxon>
        <taxon>Nitrobacteraceae</taxon>
        <taxon>Bradyrhizobium</taxon>
    </lineage>
</organism>
<dbReference type="EC" id="2.4.1.18" evidence="1"/>
<dbReference type="EMBL" id="CP000494">
    <property type="protein sequence ID" value="ABQ38241.1"/>
    <property type="molecule type" value="Genomic_DNA"/>
</dbReference>
<dbReference type="RefSeq" id="WP_012046187.1">
    <property type="nucleotide sequence ID" value="NC_009485.1"/>
</dbReference>
<dbReference type="SMR" id="A5EPZ7"/>
<dbReference type="STRING" id="288000.BBta_6323"/>
<dbReference type="CAZy" id="CBM48">
    <property type="family name" value="Carbohydrate-Binding Module Family 48"/>
</dbReference>
<dbReference type="CAZy" id="GH13">
    <property type="family name" value="Glycoside Hydrolase Family 13"/>
</dbReference>
<dbReference type="KEGG" id="bbt:BBta_6323"/>
<dbReference type="eggNOG" id="COG0296">
    <property type="taxonomic scope" value="Bacteria"/>
</dbReference>
<dbReference type="HOGENOM" id="CLU_004245_3_2_5"/>
<dbReference type="OrthoDB" id="9800174at2"/>
<dbReference type="UniPathway" id="UPA00164"/>
<dbReference type="Proteomes" id="UP000000246">
    <property type="component" value="Chromosome"/>
</dbReference>
<dbReference type="GO" id="GO:0005829">
    <property type="term" value="C:cytosol"/>
    <property type="evidence" value="ECO:0007669"/>
    <property type="project" value="TreeGrafter"/>
</dbReference>
<dbReference type="GO" id="GO:0003844">
    <property type="term" value="F:1,4-alpha-glucan branching enzyme activity"/>
    <property type="evidence" value="ECO:0007669"/>
    <property type="project" value="UniProtKB-UniRule"/>
</dbReference>
<dbReference type="GO" id="GO:0043169">
    <property type="term" value="F:cation binding"/>
    <property type="evidence" value="ECO:0007669"/>
    <property type="project" value="InterPro"/>
</dbReference>
<dbReference type="GO" id="GO:0004553">
    <property type="term" value="F:hydrolase activity, hydrolyzing O-glycosyl compounds"/>
    <property type="evidence" value="ECO:0007669"/>
    <property type="project" value="InterPro"/>
</dbReference>
<dbReference type="GO" id="GO:0005978">
    <property type="term" value="P:glycogen biosynthetic process"/>
    <property type="evidence" value="ECO:0007669"/>
    <property type="project" value="UniProtKB-UniRule"/>
</dbReference>
<dbReference type="CDD" id="cd11322">
    <property type="entry name" value="AmyAc_Glg_BE"/>
    <property type="match status" value="1"/>
</dbReference>
<dbReference type="CDD" id="cd02855">
    <property type="entry name" value="E_set_GBE_prok_N"/>
    <property type="match status" value="1"/>
</dbReference>
<dbReference type="FunFam" id="2.60.40.10:FF:000169">
    <property type="entry name" value="1,4-alpha-glucan branching enzyme GlgB"/>
    <property type="match status" value="1"/>
</dbReference>
<dbReference type="FunFam" id="2.60.40.1180:FF:000002">
    <property type="entry name" value="1,4-alpha-glucan branching enzyme GlgB"/>
    <property type="match status" value="1"/>
</dbReference>
<dbReference type="FunFam" id="3.20.20.80:FF:000003">
    <property type="entry name" value="1,4-alpha-glucan branching enzyme GlgB"/>
    <property type="match status" value="1"/>
</dbReference>
<dbReference type="Gene3D" id="3.20.20.80">
    <property type="entry name" value="Glycosidases"/>
    <property type="match status" value="1"/>
</dbReference>
<dbReference type="Gene3D" id="2.60.40.1180">
    <property type="entry name" value="Golgi alpha-mannosidase II"/>
    <property type="match status" value="1"/>
</dbReference>
<dbReference type="Gene3D" id="2.60.40.10">
    <property type="entry name" value="Immunoglobulins"/>
    <property type="match status" value="2"/>
</dbReference>
<dbReference type="HAMAP" id="MF_00685">
    <property type="entry name" value="GlgB"/>
    <property type="match status" value="1"/>
</dbReference>
<dbReference type="InterPro" id="IPR006048">
    <property type="entry name" value="A-amylase/branching_C"/>
</dbReference>
<dbReference type="InterPro" id="IPR037439">
    <property type="entry name" value="Branching_enzy"/>
</dbReference>
<dbReference type="InterPro" id="IPR006407">
    <property type="entry name" value="GlgB"/>
</dbReference>
<dbReference type="InterPro" id="IPR054169">
    <property type="entry name" value="GlgB_N"/>
</dbReference>
<dbReference type="InterPro" id="IPR044143">
    <property type="entry name" value="GlgB_N_E_set_prok"/>
</dbReference>
<dbReference type="InterPro" id="IPR006047">
    <property type="entry name" value="Glyco_hydro_13_cat_dom"/>
</dbReference>
<dbReference type="InterPro" id="IPR004193">
    <property type="entry name" value="Glyco_hydro_13_N"/>
</dbReference>
<dbReference type="InterPro" id="IPR013780">
    <property type="entry name" value="Glyco_hydro_b"/>
</dbReference>
<dbReference type="InterPro" id="IPR017853">
    <property type="entry name" value="Glycoside_hydrolase_SF"/>
</dbReference>
<dbReference type="InterPro" id="IPR013783">
    <property type="entry name" value="Ig-like_fold"/>
</dbReference>
<dbReference type="InterPro" id="IPR014756">
    <property type="entry name" value="Ig_E-set"/>
</dbReference>
<dbReference type="NCBIfam" id="TIGR01515">
    <property type="entry name" value="branching_enzym"/>
    <property type="match status" value="1"/>
</dbReference>
<dbReference type="NCBIfam" id="NF003811">
    <property type="entry name" value="PRK05402.1"/>
    <property type="match status" value="1"/>
</dbReference>
<dbReference type="NCBIfam" id="NF008967">
    <property type="entry name" value="PRK12313.1"/>
    <property type="match status" value="1"/>
</dbReference>
<dbReference type="PANTHER" id="PTHR43651">
    <property type="entry name" value="1,4-ALPHA-GLUCAN-BRANCHING ENZYME"/>
    <property type="match status" value="1"/>
</dbReference>
<dbReference type="PANTHER" id="PTHR43651:SF3">
    <property type="entry name" value="1,4-ALPHA-GLUCAN-BRANCHING ENZYME"/>
    <property type="match status" value="1"/>
</dbReference>
<dbReference type="Pfam" id="PF00128">
    <property type="entry name" value="Alpha-amylase"/>
    <property type="match status" value="1"/>
</dbReference>
<dbReference type="Pfam" id="PF02806">
    <property type="entry name" value="Alpha-amylase_C"/>
    <property type="match status" value="1"/>
</dbReference>
<dbReference type="Pfam" id="PF02922">
    <property type="entry name" value="CBM_48"/>
    <property type="match status" value="1"/>
</dbReference>
<dbReference type="Pfam" id="PF22019">
    <property type="entry name" value="GlgB_N"/>
    <property type="match status" value="1"/>
</dbReference>
<dbReference type="PIRSF" id="PIRSF000463">
    <property type="entry name" value="GlgB"/>
    <property type="match status" value="1"/>
</dbReference>
<dbReference type="SMART" id="SM00642">
    <property type="entry name" value="Aamy"/>
    <property type="match status" value="1"/>
</dbReference>
<dbReference type="SUPFAM" id="SSF51445">
    <property type="entry name" value="(Trans)glycosidases"/>
    <property type="match status" value="1"/>
</dbReference>
<dbReference type="SUPFAM" id="SSF81296">
    <property type="entry name" value="E set domains"/>
    <property type="match status" value="2"/>
</dbReference>
<dbReference type="SUPFAM" id="SSF51011">
    <property type="entry name" value="Glycosyl hydrolase domain"/>
    <property type="match status" value="1"/>
</dbReference>